<comment type="function">
    <text evidence="1">Catalyzes the reversible conversion of 2-phosphoglycerate (2-PG) into phosphoenolpyruvate (PEP). It is essential for the degradation of carbohydrates via glycolysis.</text>
</comment>
<comment type="catalytic activity">
    <reaction evidence="1">
        <text>(2R)-2-phosphoglycerate = phosphoenolpyruvate + H2O</text>
        <dbReference type="Rhea" id="RHEA:10164"/>
        <dbReference type="ChEBI" id="CHEBI:15377"/>
        <dbReference type="ChEBI" id="CHEBI:58289"/>
        <dbReference type="ChEBI" id="CHEBI:58702"/>
        <dbReference type="EC" id="4.2.1.11"/>
    </reaction>
</comment>
<comment type="cofactor">
    <cofactor evidence="1">
        <name>Mg(2+)</name>
        <dbReference type="ChEBI" id="CHEBI:18420"/>
    </cofactor>
    <text evidence="1">Binds a second Mg(2+) ion via substrate during catalysis.</text>
</comment>
<comment type="pathway">
    <text evidence="1">Carbohydrate degradation; glycolysis; pyruvate from D-glyceraldehyde 3-phosphate: step 4/5.</text>
</comment>
<comment type="subcellular location">
    <subcellularLocation>
        <location evidence="1">Cytoplasm</location>
    </subcellularLocation>
    <subcellularLocation>
        <location evidence="1">Secreted</location>
    </subcellularLocation>
    <subcellularLocation>
        <location evidence="1">Cell surface</location>
    </subcellularLocation>
    <text evidence="1">Fractions of enolase are present in both the cytoplasm and on the cell surface.</text>
</comment>
<comment type="similarity">
    <text evidence="1">Belongs to the enolase family.</text>
</comment>
<sequence>MLNKPEVLIEAITAREILDSRGRPTIEAEVLLETGAFGIAQVPSGASTGSFEAHELRDDDPARYAGKGVLTAVRNVKEKIAPQLLGTNAFDQASIDQKMIDRDGSSNKKELGANAILGVSLATAKAASAELDIPLYRYLGGPLANVLPVPMMNVLNGGSHADNNVDFQEFMIMPVGADSFTEGLRWGAEVFATLSKVLKERKLLSGVGDEGGYAPNLASNQEALDLLIEAIERSNYKPGEQIALAMDVASSEFYKDGQYVYDGSAHSPQEFIDYLAKLVSEYPIISIEDGLQEEDWDNWKLHTQSLGSRIQLVGDDLFVTNPTRLQRGIDLGVANSILIKLNQIGTLTETLETIALATRCQYTSVISHRSGETEDTTIADLAVATRAGQIKTGSLCRSERVAKYNRLLRIEEELGDRALYAPKVGLGPKF</sequence>
<evidence type="ECO:0000255" key="1">
    <source>
        <dbReference type="HAMAP-Rule" id="MF_00318"/>
    </source>
</evidence>
<organism>
    <name type="scientific">Rippkaea orientalis (strain PCC 8801 / RF-1)</name>
    <name type="common">Cyanothece sp. (strain PCC 8801)</name>
    <dbReference type="NCBI Taxonomy" id="41431"/>
    <lineage>
        <taxon>Bacteria</taxon>
        <taxon>Bacillati</taxon>
        <taxon>Cyanobacteriota</taxon>
        <taxon>Cyanophyceae</taxon>
        <taxon>Oscillatoriophycideae</taxon>
        <taxon>Chroococcales</taxon>
        <taxon>Aphanothecaceae</taxon>
        <taxon>Rippkaea</taxon>
        <taxon>Rippkaea orientalis</taxon>
    </lineage>
</organism>
<protein>
    <recommendedName>
        <fullName evidence="1">Enolase</fullName>
        <ecNumber evidence="1">4.2.1.11</ecNumber>
    </recommendedName>
    <alternativeName>
        <fullName evidence="1">2-phospho-D-glycerate hydro-lyase</fullName>
    </alternativeName>
    <alternativeName>
        <fullName evidence="1">2-phosphoglycerate dehydratase</fullName>
    </alternativeName>
</protein>
<dbReference type="EC" id="4.2.1.11" evidence="1"/>
<dbReference type="EMBL" id="CP001287">
    <property type="protein sequence ID" value="ACK65737.1"/>
    <property type="molecule type" value="Genomic_DNA"/>
</dbReference>
<dbReference type="RefSeq" id="WP_012595010.1">
    <property type="nucleotide sequence ID" value="NC_011726.1"/>
</dbReference>
<dbReference type="SMR" id="B7JW48"/>
<dbReference type="STRING" id="41431.PCC8801_1687"/>
<dbReference type="KEGG" id="cyp:PCC8801_1687"/>
<dbReference type="eggNOG" id="COG0148">
    <property type="taxonomic scope" value="Bacteria"/>
</dbReference>
<dbReference type="HOGENOM" id="CLU_031223_2_1_3"/>
<dbReference type="OrthoDB" id="9804716at2"/>
<dbReference type="UniPathway" id="UPA00109">
    <property type="reaction ID" value="UER00187"/>
</dbReference>
<dbReference type="Proteomes" id="UP000008204">
    <property type="component" value="Chromosome"/>
</dbReference>
<dbReference type="GO" id="GO:0009986">
    <property type="term" value="C:cell surface"/>
    <property type="evidence" value="ECO:0007669"/>
    <property type="project" value="UniProtKB-SubCell"/>
</dbReference>
<dbReference type="GO" id="GO:0005576">
    <property type="term" value="C:extracellular region"/>
    <property type="evidence" value="ECO:0007669"/>
    <property type="project" value="UniProtKB-SubCell"/>
</dbReference>
<dbReference type="GO" id="GO:0000015">
    <property type="term" value="C:phosphopyruvate hydratase complex"/>
    <property type="evidence" value="ECO:0007669"/>
    <property type="project" value="InterPro"/>
</dbReference>
<dbReference type="GO" id="GO:0000287">
    <property type="term" value="F:magnesium ion binding"/>
    <property type="evidence" value="ECO:0007669"/>
    <property type="project" value="UniProtKB-UniRule"/>
</dbReference>
<dbReference type="GO" id="GO:0004634">
    <property type="term" value="F:phosphopyruvate hydratase activity"/>
    <property type="evidence" value="ECO:0007669"/>
    <property type="project" value="UniProtKB-UniRule"/>
</dbReference>
<dbReference type="GO" id="GO:0006096">
    <property type="term" value="P:glycolytic process"/>
    <property type="evidence" value="ECO:0007669"/>
    <property type="project" value="UniProtKB-UniRule"/>
</dbReference>
<dbReference type="CDD" id="cd03313">
    <property type="entry name" value="enolase"/>
    <property type="match status" value="1"/>
</dbReference>
<dbReference type="FunFam" id="3.20.20.120:FF:000001">
    <property type="entry name" value="Enolase"/>
    <property type="match status" value="1"/>
</dbReference>
<dbReference type="FunFam" id="3.30.390.10:FF:000001">
    <property type="entry name" value="Enolase"/>
    <property type="match status" value="1"/>
</dbReference>
<dbReference type="Gene3D" id="3.20.20.120">
    <property type="entry name" value="Enolase-like C-terminal domain"/>
    <property type="match status" value="1"/>
</dbReference>
<dbReference type="Gene3D" id="3.30.390.10">
    <property type="entry name" value="Enolase-like, N-terminal domain"/>
    <property type="match status" value="1"/>
</dbReference>
<dbReference type="HAMAP" id="MF_00318">
    <property type="entry name" value="Enolase"/>
    <property type="match status" value="1"/>
</dbReference>
<dbReference type="InterPro" id="IPR000941">
    <property type="entry name" value="Enolase"/>
</dbReference>
<dbReference type="InterPro" id="IPR036849">
    <property type="entry name" value="Enolase-like_C_sf"/>
</dbReference>
<dbReference type="InterPro" id="IPR029017">
    <property type="entry name" value="Enolase-like_N"/>
</dbReference>
<dbReference type="InterPro" id="IPR020810">
    <property type="entry name" value="Enolase_C"/>
</dbReference>
<dbReference type="InterPro" id="IPR020809">
    <property type="entry name" value="Enolase_CS"/>
</dbReference>
<dbReference type="InterPro" id="IPR020811">
    <property type="entry name" value="Enolase_N"/>
</dbReference>
<dbReference type="NCBIfam" id="TIGR01060">
    <property type="entry name" value="eno"/>
    <property type="match status" value="1"/>
</dbReference>
<dbReference type="PANTHER" id="PTHR11902">
    <property type="entry name" value="ENOLASE"/>
    <property type="match status" value="1"/>
</dbReference>
<dbReference type="PANTHER" id="PTHR11902:SF1">
    <property type="entry name" value="ENOLASE"/>
    <property type="match status" value="1"/>
</dbReference>
<dbReference type="Pfam" id="PF00113">
    <property type="entry name" value="Enolase_C"/>
    <property type="match status" value="1"/>
</dbReference>
<dbReference type="Pfam" id="PF03952">
    <property type="entry name" value="Enolase_N"/>
    <property type="match status" value="1"/>
</dbReference>
<dbReference type="PIRSF" id="PIRSF001400">
    <property type="entry name" value="Enolase"/>
    <property type="match status" value="1"/>
</dbReference>
<dbReference type="PRINTS" id="PR00148">
    <property type="entry name" value="ENOLASE"/>
</dbReference>
<dbReference type="SFLD" id="SFLDS00001">
    <property type="entry name" value="Enolase"/>
    <property type="match status" value="1"/>
</dbReference>
<dbReference type="SFLD" id="SFLDF00002">
    <property type="entry name" value="enolase"/>
    <property type="match status" value="1"/>
</dbReference>
<dbReference type="SMART" id="SM01192">
    <property type="entry name" value="Enolase_C"/>
    <property type="match status" value="1"/>
</dbReference>
<dbReference type="SMART" id="SM01193">
    <property type="entry name" value="Enolase_N"/>
    <property type="match status" value="1"/>
</dbReference>
<dbReference type="SUPFAM" id="SSF51604">
    <property type="entry name" value="Enolase C-terminal domain-like"/>
    <property type="match status" value="1"/>
</dbReference>
<dbReference type="SUPFAM" id="SSF54826">
    <property type="entry name" value="Enolase N-terminal domain-like"/>
    <property type="match status" value="1"/>
</dbReference>
<dbReference type="PROSITE" id="PS00164">
    <property type="entry name" value="ENOLASE"/>
    <property type="match status" value="1"/>
</dbReference>
<gene>
    <name evidence="1" type="primary">eno</name>
    <name type="ordered locus">PCC8801_1687</name>
</gene>
<reference key="1">
    <citation type="journal article" date="2011" name="MBio">
        <title>Novel metabolic attributes of the genus Cyanothece, comprising a group of unicellular nitrogen-fixing Cyanobacteria.</title>
        <authorList>
            <person name="Bandyopadhyay A."/>
            <person name="Elvitigala T."/>
            <person name="Welsh E."/>
            <person name="Stockel J."/>
            <person name="Liberton M."/>
            <person name="Min H."/>
            <person name="Sherman L.A."/>
            <person name="Pakrasi H.B."/>
        </authorList>
    </citation>
    <scope>NUCLEOTIDE SEQUENCE [LARGE SCALE GENOMIC DNA]</scope>
    <source>
        <strain>PCC 8801 / RF-1</strain>
    </source>
</reference>
<keyword id="KW-0963">Cytoplasm</keyword>
<keyword id="KW-0324">Glycolysis</keyword>
<keyword id="KW-0456">Lyase</keyword>
<keyword id="KW-0460">Magnesium</keyword>
<keyword id="KW-0479">Metal-binding</keyword>
<keyword id="KW-1185">Reference proteome</keyword>
<keyword id="KW-0964">Secreted</keyword>
<proteinExistence type="inferred from homology"/>
<accession>B7JW48</accession>
<name>ENO_RIPO1</name>
<feature type="chain" id="PRO_1000119569" description="Enolase">
    <location>
        <begin position="1"/>
        <end position="430"/>
    </location>
</feature>
<feature type="active site" description="Proton donor" evidence="1">
    <location>
        <position position="210"/>
    </location>
</feature>
<feature type="active site" description="Proton acceptor" evidence="1">
    <location>
        <position position="340"/>
    </location>
</feature>
<feature type="binding site" evidence="1">
    <location>
        <position position="168"/>
    </location>
    <ligand>
        <name>(2R)-2-phosphoglycerate</name>
        <dbReference type="ChEBI" id="CHEBI:58289"/>
    </ligand>
</feature>
<feature type="binding site" evidence="1">
    <location>
        <position position="247"/>
    </location>
    <ligand>
        <name>Mg(2+)</name>
        <dbReference type="ChEBI" id="CHEBI:18420"/>
    </ligand>
</feature>
<feature type="binding site" evidence="1">
    <location>
        <position position="288"/>
    </location>
    <ligand>
        <name>Mg(2+)</name>
        <dbReference type="ChEBI" id="CHEBI:18420"/>
    </ligand>
</feature>
<feature type="binding site" evidence="1">
    <location>
        <position position="315"/>
    </location>
    <ligand>
        <name>Mg(2+)</name>
        <dbReference type="ChEBI" id="CHEBI:18420"/>
    </ligand>
</feature>
<feature type="binding site" evidence="1">
    <location>
        <position position="340"/>
    </location>
    <ligand>
        <name>(2R)-2-phosphoglycerate</name>
        <dbReference type="ChEBI" id="CHEBI:58289"/>
    </ligand>
</feature>
<feature type="binding site" evidence="1">
    <location>
        <position position="369"/>
    </location>
    <ligand>
        <name>(2R)-2-phosphoglycerate</name>
        <dbReference type="ChEBI" id="CHEBI:58289"/>
    </ligand>
</feature>
<feature type="binding site" evidence="1">
    <location>
        <position position="370"/>
    </location>
    <ligand>
        <name>(2R)-2-phosphoglycerate</name>
        <dbReference type="ChEBI" id="CHEBI:58289"/>
    </ligand>
</feature>
<feature type="binding site" evidence="1">
    <location>
        <position position="391"/>
    </location>
    <ligand>
        <name>(2R)-2-phosphoglycerate</name>
        <dbReference type="ChEBI" id="CHEBI:58289"/>
    </ligand>
</feature>